<sequence length="126" mass="14783">MLKNTLDMTEYLSFLYFIFFSLFFCCFMLFTSWFLGGRSLSRYKNTPFESGVVSVGNTHLHFSVKFYLIAIFFVIFDVEALYLYAWSVSIVESGWIGFVEATIFILFLLLSLFYLVRIKALNWVTS</sequence>
<evidence type="ECO:0000255" key="1">
    <source>
        <dbReference type="HAMAP-Rule" id="MF_01394"/>
    </source>
</evidence>
<comment type="function">
    <text evidence="1">NDH-1 shuttles electrons from NADH, via FMN and iron-sulfur (Fe-S) centers, to quinones in the respiratory chain. The immediate electron acceptor for the enzyme in this species is believed to be ubiquinone. Couples the redox reaction to proton translocation (for every two electrons transferred, four hydrogen ions are translocated across the cytoplasmic membrane), and thus conserves the redox energy in a proton gradient.</text>
</comment>
<comment type="catalytic activity">
    <reaction evidence="1">
        <text>a quinone + NADH + 5 H(+)(in) = a quinol + NAD(+) + 4 H(+)(out)</text>
        <dbReference type="Rhea" id="RHEA:57888"/>
        <dbReference type="ChEBI" id="CHEBI:15378"/>
        <dbReference type="ChEBI" id="CHEBI:24646"/>
        <dbReference type="ChEBI" id="CHEBI:57540"/>
        <dbReference type="ChEBI" id="CHEBI:57945"/>
        <dbReference type="ChEBI" id="CHEBI:132124"/>
    </reaction>
</comment>
<comment type="subunit">
    <text evidence="1">NDH-1 is composed of 13 different subunits. Subunits NuoA, H, J, K, L, M, N constitute the membrane sector of the complex.</text>
</comment>
<comment type="subcellular location">
    <subcellularLocation>
        <location evidence="1">Cell membrane</location>
        <topology evidence="1">Multi-pass membrane protein</topology>
    </subcellularLocation>
</comment>
<comment type="similarity">
    <text evidence="1">Belongs to the complex I subunit 3 family.</text>
</comment>
<dbReference type="EC" id="7.1.1.-" evidence="1"/>
<dbReference type="EMBL" id="AE013218">
    <property type="protein sequence ID" value="AAM67715.1"/>
    <property type="molecule type" value="Genomic_DNA"/>
</dbReference>
<dbReference type="RefSeq" id="WP_011053682.1">
    <property type="nucleotide sequence ID" value="NC_004061.1"/>
</dbReference>
<dbReference type="SMR" id="Q8K9Y7"/>
<dbReference type="STRING" id="198804.BUsg_147"/>
<dbReference type="GeneID" id="93003617"/>
<dbReference type="KEGG" id="bas:BUsg_147"/>
<dbReference type="eggNOG" id="COG0838">
    <property type="taxonomic scope" value="Bacteria"/>
</dbReference>
<dbReference type="HOGENOM" id="CLU_119549_2_1_6"/>
<dbReference type="Proteomes" id="UP000000416">
    <property type="component" value="Chromosome"/>
</dbReference>
<dbReference type="GO" id="GO:0030964">
    <property type="term" value="C:NADH dehydrogenase complex"/>
    <property type="evidence" value="ECO:0007669"/>
    <property type="project" value="TreeGrafter"/>
</dbReference>
<dbReference type="GO" id="GO:0005886">
    <property type="term" value="C:plasma membrane"/>
    <property type="evidence" value="ECO:0007669"/>
    <property type="project" value="UniProtKB-SubCell"/>
</dbReference>
<dbReference type="GO" id="GO:0008137">
    <property type="term" value="F:NADH dehydrogenase (ubiquinone) activity"/>
    <property type="evidence" value="ECO:0007669"/>
    <property type="project" value="InterPro"/>
</dbReference>
<dbReference type="GO" id="GO:0050136">
    <property type="term" value="F:NADH:ubiquinone reductase (non-electrogenic) activity"/>
    <property type="evidence" value="ECO:0007669"/>
    <property type="project" value="UniProtKB-UniRule"/>
</dbReference>
<dbReference type="GO" id="GO:0048038">
    <property type="term" value="F:quinone binding"/>
    <property type="evidence" value="ECO:0007669"/>
    <property type="project" value="UniProtKB-KW"/>
</dbReference>
<dbReference type="Gene3D" id="1.20.58.1610">
    <property type="entry name" value="NADH:ubiquinone/plastoquinone oxidoreductase, chain 3"/>
    <property type="match status" value="1"/>
</dbReference>
<dbReference type="HAMAP" id="MF_01394">
    <property type="entry name" value="NDH1_NuoA"/>
    <property type="match status" value="1"/>
</dbReference>
<dbReference type="InterPro" id="IPR023043">
    <property type="entry name" value="NAD(P)H_OxRDtase_bac/plastid"/>
</dbReference>
<dbReference type="InterPro" id="IPR000440">
    <property type="entry name" value="NADH_UbQ/plastoQ_OxRdtase_su3"/>
</dbReference>
<dbReference type="InterPro" id="IPR038430">
    <property type="entry name" value="NDAH_ubi_oxred_su3_sf"/>
</dbReference>
<dbReference type="PANTHER" id="PTHR11058:SF21">
    <property type="entry name" value="NADH-QUINONE OXIDOREDUCTASE SUBUNIT A"/>
    <property type="match status" value="1"/>
</dbReference>
<dbReference type="PANTHER" id="PTHR11058">
    <property type="entry name" value="NADH-UBIQUINONE OXIDOREDUCTASE CHAIN 3"/>
    <property type="match status" value="1"/>
</dbReference>
<dbReference type="Pfam" id="PF00507">
    <property type="entry name" value="Oxidored_q4"/>
    <property type="match status" value="1"/>
</dbReference>
<name>NUOA_BUCAP</name>
<proteinExistence type="inferred from homology"/>
<keyword id="KW-1003">Cell membrane</keyword>
<keyword id="KW-0472">Membrane</keyword>
<keyword id="KW-0520">NAD</keyword>
<keyword id="KW-0874">Quinone</keyword>
<keyword id="KW-1278">Translocase</keyword>
<keyword id="KW-0812">Transmembrane</keyword>
<keyword id="KW-1133">Transmembrane helix</keyword>
<keyword id="KW-0813">Transport</keyword>
<keyword id="KW-0830">Ubiquinone</keyword>
<accession>Q8K9Y7</accession>
<protein>
    <recommendedName>
        <fullName evidence="1">NADH-quinone oxidoreductase subunit A</fullName>
        <ecNumber evidence="1">7.1.1.-</ecNumber>
    </recommendedName>
    <alternativeName>
        <fullName evidence="1">NADH dehydrogenase I subunit A</fullName>
    </alternativeName>
    <alternativeName>
        <fullName evidence="1">NDH-1 subunit A</fullName>
    </alternativeName>
    <alternativeName>
        <fullName evidence="1">NUO1</fullName>
    </alternativeName>
</protein>
<feature type="chain" id="PRO_0000117867" description="NADH-quinone oxidoreductase subunit A">
    <location>
        <begin position="1"/>
        <end position="126"/>
    </location>
</feature>
<feature type="transmembrane region" description="Helical" evidence="1">
    <location>
        <begin position="14"/>
        <end position="34"/>
    </location>
</feature>
<feature type="transmembrane region" description="Helical" evidence="1">
    <location>
        <begin position="66"/>
        <end position="86"/>
    </location>
</feature>
<feature type="transmembrane region" description="Helical" evidence="1">
    <location>
        <begin position="96"/>
        <end position="116"/>
    </location>
</feature>
<reference key="1">
    <citation type="journal article" date="2002" name="Science">
        <title>50 million years of genomic stasis in endosymbiotic bacteria.</title>
        <authorList>
            <person name="Tamas I."/>
            <person name="Klasson L."/>
            <person name="Canbaeck B."/>
            <person name="Naeslund A.K."/>
            <person name="Eriksson A.-S."/>
            <person name="Wernegreen J.J."/>
            <person name="Sandstroem J.P."/>
            <person name="Moran N.A."/>
            <person name="Andersson S.G.E."/>
        </authorList>
    </citation>
    <scope>NUCLEOTIDE SEQUENCE [LARGE SCALE GENOMIC DNA]</scope>
    <source>
        <strain>Sg</strain>
    </source>
</reference>
<organism>
    <name type="scientific">Buchnera aphidicola subsp. Schizaphis graminum (strain Sg)</name>
    <dbReference type="NCBI Taxonomy" id="198804"/>
    <lineage>
        <taxon>Bacteria</taxon>
        <taxon>Pseudomonadati</taxon>
        <taxon>Pseudomonadota</taxon>
        <taxon>Gammaproteobacteria</taxon>
        <taxon>Enterobacterales</taxon>
        <taxon>Erwiniaceae</taxon>
        <taxon>Buchnera</taxon>
    </lineage>
</organism>
<gene>
    <name evidence="1" type="primary">nuoA</name>
    <name type="ordered locus">BUsg_147</name>
</gene>